<sequence>MMQTKVQNKKRQVAFFILLMLWGEVGSESIQYSVLEETESGTFVANLTKDLGLRVGELASRGARVVFKGNRQHLQFDPQTHDLLLNEKLDREELCGSTEPCVLPFQVLLENPLQFFQASLRVRDINDHAPEFPAREMLLKISEITMPGKIFPLKMAHDLDTGSNGLQRYTISSNPHFHVLTRNRSEGRKFPELVLDKPLDREEQPQLRLTLIALDGGSPPRSGTSEIQIQVLDINDNVPEFAQELYEAQVPENNPLGSLVITVSARDLDAGSFGKVSYALFQVDDVNQPFEINAITGEIRLRKALDFEEIQSYDVDVEATDGGGLSGKCSLVVRVLDVNDNAPELTMSFFISLIPENLPEITVAVFSVSDADSGHNQQVICSIENNLPFLLRPSVENFYTLVTEGALDRESRAEYNITITVTDLGTPRLKTQQSITVQVSDVNDNAPAFTQTSYTLFVRENNSPALHIGSVSATDRDSGINAQVTYSLLPPQDPHLPLSSLVSINADNGHLFALRSLDYEALQSFEFRVGATDRGSPALSSEALVRLLVLDANDNSPFVLYPLQNGSAPCTELVPRAAEPGYLVTKVVAVDGDSGQNAWLSYQLLKATELGLFGVWAHNGEVRTARLLSERDAAKHRLVVLVKDNGEPPRSATATLHVLLVDGFSQPYLPLPEAAPAQAQADSLTVYLVVALASVSSLFLFSVLLFVAVRLCRRSRAASVGRYSVPEGPFPGHLVDVSGTGTLSQSYQYKVCLTGGSETNEFKFLKPIMPNFPPQGTEREMEETPTSRNSFPFS</sequence>
<reference key="1">
    <citation type="journal article" date="1999" name="Cell">
        <title>A striking organization of a large family of human neural cadherin-like cell adhesion genes.</title>
        <authorList>
            <person name="Wu Q."/>
            <person name="Maniatis T."/>
        </authorList>
    </citation>
    <scope>NUCLEOTIDE SEQUENCE [MRNA]</scope>
    <scope>VARIANT VAL-446</scope>
</reference>
<reference key="2">
    <citation type="journal article" date="2001" name="FEBS Lett.">
        <title>The human and murine protocadherin-beta one-exon gene families show high evolutionary conservation, despite the difference in gene number.</title>
        <authorList>
            <person name="Vanhalst K."/>
            <person name="Kools P."/>
            <person name="Vanden Eynde E."/>
            <person name="van Roy F."/>
        </authorList>
    </citation>
    <scope>NUCLEOTIDE SEQUENCE [MRNA]</scope>
    <scope>VARIANT VAL-446</scope>
</reference>
<reference key="3">
    <citation type="journal article" date="2004" name="Nat. Genet.">
        <title>Complete sequencing and characterization of 21,243 full-length human cDNAs.</title>
        <authorList>
            <person name="Ota T."/>
            <person name="Suzuki Y."/>
            <person name="Nishikawa T."/>
            <person name="Otsuki T."/>
            <person name="Sugiyama T."/>
            <person name="Irie R."/>
            <person name="Wakamatsu A."/>
            <person name="Hayashi K."/>
            <person name="Sato H."/>
            <person name="Nagai K."/>
            <person name="Kimura K."/>
            <person name="Makita H."/>
            <person name="Sekine M."/>
            <person name="Obayashi M."/>
            <person name="Nishi T."/>
            <person name="Shibahara T."/>
            <person name="Tanaka T."/>
            <person name="Ishii S."/>
            <person name="Yamamoto J."/>
            <person name="Saito K."/>
            <person name="Kawai Y."/>
            <person name="Isono Y."/>
            <person name="Nakamura Y."/>
            <person name="Nagahari K."/>
            <person name="Murakami K."/>
            <person name="Yasuda T."/>
            <person name="Iwayanagi T."/>
            <person name="Wagatsuma M."/>
            <person name="Shiratori A."/>
            <person name="Sudo H."/>
            <person name="Hosoiri T."/>
            <person name="Kaku Y."/>
            <person name="Kodaira H."/>
            <person name="Kondo H."/>
            <person name="Sugawara M."/>
            <person name="Takahashi M."/>
            <person name="Kanda K."/>
            <person name="Yokoi T."/>
            <person name="Furuya T."/>
            <person name="Kikkawa E."/>
            <person name="Omura Y."/>
            <person name="Abe K."/>
            <person name="Kamihara K."/>
            <person name="Katsuta N."/>
            <person name="Sato K."/>
            <person name="Tanikawa M."/>
            <person name="Yamazaki M."/>
            <person name="Ninomiya K."/>
            <person name="Ishibashi T."/>
            <person name="Yamashita H."/>
            <person name="Murakawa K."/>
            <person name="Fujimori K."/>
            <person name="Tanai H."/>
            <person name="Kimata M."/>
            <person name="Watanabe M."/>
            <person name="Hiraoka S."/>
            <person name="Chiba Y."/>
            <person name="Ishida S."/>
            <person name="Ono Y."/>
            <person name="Takiguchi S."/>
            <person name="Watanabe S."/>
            <person name="Yosida M."/>
            <person name="Hotuta T."/>
            <person name="Kusano J."/>
            <person name="Kanehori K."/>
            <person name="Takahashi-Fujii A."/>
            <person name="Hara H."/>
            <person name="Tanase T.-O."/>
            <person name="Nomura Y."/>
            <person name="Togiya S."/>
            <person name="Komai F."/>
            <person name="Hara R."/>
            <person name="Takeuchi K."/>
            <person name="Arita M."/>
            <person name="Imose N."/>
            <person name="Musashino K."/>
            <person name="Yuuki H."/>
            <person name="Oshima A."/>
            <person name="Sasaki N."/>
            <person name="Aotsuka S."/>
            <person name="Yoshikawa Y."/>
            <person name="Matsunawa H."/>
            <person name="Ichihara T."/>
            <person name="Shiohata N."/>
            <person name="Sano S."/>
            <person name="Moriya S."/>
            <person name="Momiyama H."/>
            <person name="Satoh N."/>
            <person name="Takami S."/>
            <person name="Terashima Y."/>
            <person name="Suzuki O."/>
            <person name="Nakagawa S."/>
            <person name="Senoh A."/>
            <person name="Mizoguchi H."/>
            <person name="Goto Y."/>
            <person name="Shimizu F."/>
            <person name="Wakebe H."/>
            <person name="Hishigaki H."/>
            <person name="Watanabe T."/>
            <person name="Sugiyama A."/>
            <person name="Takemoto M."/>
            <person name="Kawakami B."/>
            <person name="Yamazaki M."/>
            <person name="Watanabe K."/>
            <person name="Kumagai A."/>
            <person name="Itakura S."/>
            <person name="Fukuzumi Y."/>
            <person name="Fujimori Y."/>
            <person name="Komiyama M."/>
            <person name="Tashiro H."/>
            <person name="Tanigami A."/>
            <person name="Fujiwara T."/>
            <person name="Ono T."/>
            <person name="Yamada K."/>
            <person name="Fujii Y."/>
            <person name="Ozaki K."/>
            <person name="Hirao M."/>
            <person name="Ohmori Y."/>
            <person name="Kawabata A."/>
            <person name="Hikiji T."/>
            <person name="Kobatake N."/>
            <person name="Inagaki H."/>
            <person name="Ikema Y."/>
            <person name="Okamoto S."/>
            <person name="Okitani R."/>
            <person name="Kawakami T."/>
            <person name="Noguchi S."/>
            <person name="Itoh T."/>
            <person name="Shigeta K."/>
            <person name="Senba T."/>
            <person name="Matsumura K."/>
            <person name="Nakajima Y."/>
            <person name="Mizuno T."/>
            <person name="Morinaga M."/>
            <person name="Sasaki M."/>
            <person name="Togashi T."/>
            <person name="Oyama M."/>
            <person name="Hata H."/>
            <person name="Watanabe M."/>
            <person name="Komatsu T."/>
            <person name="Mizushima-Sugano J."/>
            <person name="Satoh T."/>
            <person name="Shirai Y."/>
            <person name="Takahashi Y."/>
            <person name="Nakagawa K."/>
            <person name="Okumura K."/>
            <person name="Nagase T."/>
            <person name="Nomura N."/>
            <person name="Kikuchi H."/>
            <person name="Masuho Y."/>
            <person name="Yamashita R."/>
            <person name="Nakai K."/>
            <person name="Yada T."/>
            <person name="Nakamura Y."/>
            <person name="Ohara O."/>
            <person name="Isogai T."/>
            <person name="Sugano S."/>
        </authorList>
    </citation>
    <scope>NUCLEOTIDE SEQUENCE [LARGE SCALE MRNA]</scope>
    <scope>VARIANTS GLN-636 AND ASP-776</scope>
    <source>
        <tissue>Thalamus</tissue>
    </source>
</reference>
<accession>Q9Y5E3</accession>
<accession>B2R8R9</accession>
<gene>
    <name evidence="9" type="primary">PCDHB6</name>
</gene>
<protein>
    <recommendedName>
        <fullName evidence="8">Protocadherin beta-6</fullName>
        <shortName evidence="8">PCDH-beta-6</shortName>
    </recommendedName>
</protein>
<proteinExistence type="evidence at protein level"/>
<feature type="signal peptide" evidence="1">
    <location>
        <begin position="1"/>
        <end position="27"/>
    </location>
</feature>
<feature type="chain" id="PRO_0000003924" description="Protocadherin beta-6">
    <location>
        <begin position="28"/>
        <end position="794"/>
    </location>
</feature>
<feature type="topological domain" description="Extracellular" evidence="1">
    <location>
        <begin position="28"/>
        <end position="688"/>
    </location>
</feature>
<feature type="transmembrane region" description="Helical" evidence="2">
    <location>
        <begin position="689"/>
        <end position="709"/>
    </location>
</feature>
<feature type="topological domain" description="Cytoplasmic" evidence="1">
    <location>
        <begin position="710"/>
        <end position="794"/>
    </location>
</feature>
<feature type="domain" description="Cadherin 1" evidence="3">
    <location>
        <begin position="34"/>
        <end position="132"/>
    </location>
</feature>
<feature type="domain" description="Cadherin 2" evidence="3">
    <location>
        <begin position="137"/>
        <end position="241"/>
    </location>
</feature>
<feature type="domain" description="Cadherin 3" evidence="3">
    <location>
        <begin position="246"/>
        <end position="345"/>
    </location>
</feature>
<feature type="domain" description="Cadherin 4" evidence="3">
    <location>
        <begin position="350"/>
        <end position="449"/>
    </location>
</feature>
<feature type="domain" description="Cadherin 5" evidence="3">
    <location>
        <begin position="454"/>
        <end position="559"/>
    </location>
</feature>
<feature type="domain" description="Cadherin 6" evidence="3">
    <location>
        <begin position="566"/>
        <end position="669"/>
    </location>
</feature>
<feature type="region of interest" description="Disordered" evidence="4">
    <location>
        <begin position="773"/>
        <end position="794"/>
    </location>
</feature>
<feature type="compositionally biased region" description="Polar residues" evidence="4">
    <location>
        <begin position="784"/>
        <end position="794"/>
    </location>
</feature>
<feature type="glycosylation site" description="N-linked (GlcNAc...) asparagine" evidence="2">
    <location>
        <position position="46"/>
    </location>
</feature>
<feature type="glycosylation site" description="N-linked (GlcNAc...) asparagine" evidence="2">
    <location>
        <position position="183"/>
    </location>
</feature>
<feature type="glycosylation site" description="N-linked (GlcNAc...) asparagine" evidence="2">
    <location>
        <position position="416"/>
    </location>
</feature>
<feature type="glycosylation site" description="N-linked (GlcNAc...) asparagine" evidence="2">
    <location>
        <position position="565"/>
    </location>
</feature>
<feature type="disulfide bond" evidence="1">
    <location>
        <begin position="95"/>
        <end position="101"/>
    </location>
</feature>
<feature type="sequence variant" id="VAR_021879" description="In dbSNP:rs3776096.">
    <original>V</original>
    <variation>I</variation>
    <location>
        <position position="231"/>
    </location>
</feature>
<feature type="sequence variant" id="VAR_033705" description="In dbSNP:rs10076554.">
    <original>L</original>
    <variation>F</variation>
    <location>
        <position position="232"/>
    </location>
</feature>
<feature type="sequence variant" id="VAR_070665" description="In dbSNP:rs246707." evidence="5 6">
    <original>A</original>
    <variation>V</variation>
    <location>
        <position position="446"/>
    </location>
</feature>
<feature type="sequence variant" id="VAR_033706" description="In dbSNP:rs246703." evidence="7">
    <original>H</original>
    <variation>Q</variation>
    <location>
        <position position="636"/>
    </location>
</feature>
<feature type="sequence variant" id="VAR_033707" description="In dbSNP:rs17685621.">
    <original>Y</original>
    <variation>H</variation>
    <location>
        <position position="747"/>
    </location>
</feature>
<feature type="sequence variant" id="VAR_070666" description="In dbSNP:rs17844444." evidence="7">
    <original>G</original>
    <variation>D</variation>
    <location>
        <position position="776"/>
    </location>
</feature>
<name>PCDB6_HUMAN</name>
<comment type="function">
    <text evidence="1">Calcium-dependent cell-adhesion protein involved in cells self-recognition and non-self discrimination. Thereby, it is involved in the establishment and maintenance of specific neuronal connections in the brain.</text>
</comment>
<comment type="subunit">
    <text evidence="1">Forms homodimers in trans (molecules expressed by two different cells). Forms promiscuous heterodimers in cis (at the plasma membrane of the same cell) with other protocadherins.</text>
</comment>
<comment type="subcellular location">
    <subcellularLocation>
        <location evidence="1">Cell membrane</location>
        <topology evidence="1">Single-pass type I membrane protein</topology>
    </subcellularLocation>
</comment>
<comment type="domain">
    <text evidence="1">Cadherin 1 to cadherin 4 domains mediate homophilic trans-interaction, the interaction with an identical protocadherin expressed by a neighboring cell. This is a head-to-tail interaction, the cadherin 1 domain interacting with the cadherin 4 domain and the cadherin 2 domain interacting the cadherin 3 domain of the other protocadherin. The cadherin 6 domain mediates promiscuous interactions with protocadherins on the same cell membrane. Each cadherin domain binds three calcium ions.</text>
</comment>
<dbReference type="EMBL" id="AF152499">
    <property type="protein sequence ID" value="AAD43760.1"/>
    <property type="molecule type" value="mRNA"/>
</dbReference>
<dbReference type="EMBL" id="AF217752">
    <property type="protein sequence ID" value="AAK51619.1"/>
    <property type="molecule type" value="mRNA"/>
</dbReference>
<dbReference type="EMBL" id="AK313482">
    <property type="protein sequence ID" value="BAG36266.1"/>
    <property type="molecule type" value="mRNA"/>
</dbReference>
<dbReference type="CCDS" id="CCDS4248.1"/>
<dbReference type="RefSeq" id="NP_001290074.1">
    <property type="nucleotide sequence ID" value="NM_001303145.1"/>
</dbReference>
<dbReference type="RefSeq" id="NP_061762.2">
    <property type="nucleotide sequence ID" value="NM_018939.4"/>
</dbReference>
<dbReference type="SMR" id="Q9Y5E3"/>
<dbReference type="BioGRID" id="121070">
    <property type="interactions" value="35"/>
</dbReference>
<dbReference type="FunCoup" id="Q9Y5E3">
    <property type="interactions" value="127"/>
</dbReference>
<dbReference type="IntAct" id="Q9Y5E3">
    <property type="interactions" value="25"/>
</dbReference>
<dbReference type="STRING" id="9606.ENSP00000231136"/>
<dbReference type="GlyCosmos" id="Q9Y5E3">
    <property type="glycosylation" value="4 sites, No reported glycans"/>
</dbReference>
<dbReference type="GlyGen" id="Q9Y5E3">
    <property type="glycosylation" value="4 sites"/>
</dbReference>
<dbReference type="iPTMnet" id="Q9Y5E3"/>
<dbReference type="PhosphoSitePlus" id="Q9Y5E3"/>
<dbReference type="BioMuta" id="PCDHB6"/>
<dbReference type="DMDM" id="13431374"/>
<dbReference type="jPOST" id="Q9Y5E3"/>
<dbReference type="MassIVE" id="Q9Y5E3"/>
<dbReference type="PaxDb" id="9606-ENSP00000231136"/>
<dbReference type="PeptideAtlas" id="Q9Y5E3"/>
<dbReference type="ProteomicsDB" id="86342"/>
<dbReference type="Antibodypedia" id="27197">
    <property type="antibodies" value="38 antibodies from 9 providers"/>
</dbReference>
<dbReference type="DNASU" id="56130"/>
<dbReference type="Ensembl" id="ENST00000231136.4">
    <property type="protein sequence ID" value="ENSP00000231136.1"/>
    <property type="gene ID" value="ENSG00000113211.6"/>
</dbReference>
<dbReference type="Ensembl" id="ENST00000708361.1">
    <property type="protein sequence ID" value="ENSP00000517189.1"/>
    <property type="gene ID" value="ENSG00000291679.1"/>
</dbReference>
<dbReference type="GeneID" id="56130"/>
<dbReference type="KEGG" id="hsa:56130"/>
<dbReference type="MANE-Select" id="ENST00000231136.4">
    <property type="protein sequence ID" value="ENSP00000231136.1"/>
    <property type="RefSeq nucleotide sequence ID" value="NM_018939.4"/>
    <property type="RefSeq protein sequence ID" value="NP_061762.2"/>
</dbReference>
<dbReference type="UCSC" id="uc003lir.4">
    <property type="organism name" value="human"/>
</dbReference>
<dbReference type="AGR" id="HGNC:8691"/>
<dbReference type="CTD" id="56130"/>
<dbReference type="GeneCards" id="PCDHB6"/>
<dbReference type="HGNC" id="HGNC:8691">
    <property type="gene designation" value="PCDHB6"/>
</dbReference>
<dbReference type="HPA" id="ENSG00000113211">
    <property type="expression patterns" value="Low tissue specificity"/>
</dbReference>
<dbReference type="MIM" id="604967">
    <property type="type" value="gene"/>
</dbReference>
<dbReference type="MIM" id="606332">
    <property type="type" value="gene"/>
</dbReference>
<dbReference type="neXtProt" id="NX_Q9Y5E3"/>
<dbReference type="OpenTargets" id="ENSG00000113211"/>
<dbReference type="PharmGKB" id="PA33040"/>
<dbReference type="VEuPathDB" id="HostDB:ENSG00000113211"/>
<dbReference type="eggNOG" id="KOG3594">
    <property type="taxonomic scope" value="Eukaryota"/>
</dbReference>
<dbReference type="GeneTree" id="ENSGT00940000163433"/>
<dbReference type="InParanoid" id="Q9Y5E3"/>
<dbReference type="OMA" id="GREMEEN"/>
<dbReference type="OrthoDB" id="6252479at2759"/>
<dbReference type="PAN-GO" id="Q9Y5E3">
    <property type="GO annotations" value="2 GO annotations based on evolutionary models"/>
</dbReference>
<dbReference type="PhylomeDB" id="Q9Y5E3"/>
<dbReference type="TreeFam" id="TF332299"/>
<dbReference type="PathwayCommons" id="Q9Y5E3"/>
<dbReference type="SignaLink" id="Q9Y5E3"/>
<dbReference type="BioGRID-ORCS" id="56130">
    <property type="hits" value="11 hits in 1106 CRISPR screens"/>
</dbReference>
<dbReference type="GenomeRNAi" id="56130"/>
<dbReference type="Pharos" id="Q9Y5E3">
    <property type="development level" value="Tdark"/>
</dbReference>
<dbReference type="PRO" id="PR:Q9Y5E3"/>
<dbReference type="Proteomes" id="UP000005640">
    <property type="component" value="Chromosome 5"/>
</dbReference>
<dbReference type="RNAct" id="Q9Y5E3">
    <property type="molecule type" value="protein"/>
</dbReference>
<dbReference type="Bgee" id="ENSG00000113211">
    <property type="expression patterns" value="Expressed in cortical plate and 110 other cell types or tissues"/>
</dbReference>
<dbReference type="ExpressionAtlas" id="Q9Y5E3">
    <property type="expression patterns" value="baseline and differential"/>
</dbReference>
<dbReference type="GO" id="GO:0016020">
    <property type="term" value="C:membrane"/>
    <property type="evidence" value="ECO:0000303"/>
    <property type="project" value="UniProtKB"/>
</dbReference>
<dbReference type="GO" id="GO:0005886">
    <property type="term" value="C:plasma membrane"/>
    <property type="evidence" value="ECO:0000250"/>
    <property type="project" value="UniProtKB"/>
</dbReference>
<dbReference type="GO" id="GO:0045202">
    <property type="term" value="C:synapse"/>
    <property type="evidence" value="ECO:0007669"/>
    <property type="project" value="GOC"/>
</dbReference>
<dbReference type="GO" id="GO:0005509">
    <property type="term" value="F:calcium ion binding"/>
    <property type="evidence" value="ECO:0000250"/>
    <property type="project" value="UniProtKB"/>
</dbReference>
<dbReference type="GO" id="GO:0042802">
    <property type="term" value="F:identical protein binding"/>
    <property type="evidence" value="ECO:0000250"/>
    <property type="project" value="UniProtKB"/>
</dbReference>
<dbReference type="GO" id="GO:0016339">
    <property type="term" value="P:calcium-dependent cell-cell adhesion via plasma membrane cell adhesion molecules"/>
    <property type="evidence" value="ECO:0000303"/>
    <property type="project" value="UniProtKB"/>
</dbReference>
<dbReference type="GO" id="GO:0007155">
    <property type="term" value="P:cell adhesion"/>
    <property type="evidence" value="ECO:0000318"/>
    <property type="project" value="GO_Central"/>
</dbReference>
<dbReference type="GO" id="GO:0009988">
    <property type="term" value="P:cell-cell recognition"/>
    <property type="evidence" value="ECO:0000250"/>
    <property type="project" value="UniProtKB"/>
</dbReference>
<dbReference type="GO" id="GO:0007268">
    <property type="term" value="P:chemical synaptic transmission"/>
    <property type="evidence" value="ECO:0000304"/>
    <property type="project" value="UniProtKB"/>
</dbReference>
<dbReference type="GO" id="GO:0007156">
    <property type="term" value="P:homophilic cell adhesion via plasma membrane adhesion molecules"/>
    <property type="evidence" value="ECO:0000250"/>
    <property type="project" value="UniProtKB"/>
</dbReference>
<dbReference type="GO" id="GO:0007399">
    <property type="term" value="P:nervous system development"/>
    <property type="evidence" value="ECO:0000304"/>
    <property type="project" value="ProtInc"/>
</dbReference>
<dbReference type="GO" id="GO:0007416">
    <property type="term" value="P:synapse assembly"/>
    <property type="evidence" value="ECO:0000304"/>
    <property type="project" value="UniProtKB"/>
</dbReference>
<dbReference type="CDD" id="cd11304">
    <property type="entry name" value="Cadherin_repeat"/>
    <property type="match status" value="5"/>
</dbReference>
<dbReference type="FunFam" id="2.60.40.60:FF:000001">
    <property type="entry name" value="Protocadherin alpha 2"/>
    <property type="match status" value="1"/>
</dbReference>
<dbReference type="FunFam" id="2.60.40.60:FF:000002">
    <property type="entry name" value="Protocadherin alpha 2"/>
    <property type="match status" value="1"/>
</dbReference>
<dbReference type="FunFam" id="2.60.40.60:FF:000006">
    <property type="entry name" value="Protocadherin alpha 2"/>
    <property type="match status" value="1"/>
</dbReference>
<dbReference type="FunFam" id="2.60.40.60:FF:000046">
    <property type="entry name" value="Protocadherin beta 5"/>
    <property type="match status" value="1"/>
</dbReference>
<dbReference type="FunFam" id="2.60.40.60:FF:000309">
    <property type="entry name" value="Protocadherin beta-8"/>
    <property type="match status" value="1"/>
</dbReference>
<dbReference type="FunFam" id="2.60.40.60:FF:000018">
    <property type="entry name" value="Protocadherin gamma c3"/>
    <property type="match status" value="1"/>
</dbReference>
<dbReference type="Gene3D" id="2.60.40.60">
    <property type="entry name" value="Cadherins"/>
    <property type="match status" value="6"/>
</dbReference>
<dbReference type="InterPro" id="IPR002126">
    <property type="entry name" value="Cadherin-like_dom"/>
</dbReference>
<dbReference type="InterPro" id="IPR015919">
    <property type="entry name" value="Cadherin-like_sf"/>
</dbReference>
<dbReference type="InterPro" id="IPR032455">
    <property type="entry name" value="Cadherin_C"/>
</dbReference>
<dbReference type="InterPro" id="IPR020894">
    <property type="entry name" value="Cadherin_CS"/>
</dbReference>
<dbReference type="InterPro" id="IPR013164">
    <property type="entry name" value="Cadherin_N"/>
</dbReference>
<dbReference type="InterPro" id="IPR050174">
    <property type="entry name" value="Protocadherin/Cadherin-CA"/>
</dbReference>
<dbReference type="PANTHER" id="PTHR24028">
    <property type="entry name" value="CADHERIN-87A"/>
    <property type="match status" value="1"/>
</dbReference>
<dbReference type="PANTHER" id="PTHR24028:SF104">
    <property type="entry name" value="PROTOCADHERIN BETA-6"/>
    <property type="match status" value="1"/>
</dbReference>
<dbReference type="Pfam" id="PF00028">
    <property type="entry name" value="Cadherin"/>
    <property type="match status" value="5"/>
</dbReference>
<dbReference type="Pfam" id="PF08266">
    <property type="entry name" value="Cadherin_2"/>
    <property type="match status" value="1"/>
</dbReference>
<dbReference type="Pfam" id="PF16492">
    <property type="entry name" value="Cadherin_C_2"/>
    <property type="match status" value="1"/>
</dbReference>
<dbReference type="PRINTS" id="PR00205">
    <property type="entry name" value="CADHERIN"/>
</dbReference>
<dbReference type="SMART" id="SM00112">
    <property type="entry name" value="CA"/>
    <property type="match status" value="6"/>
</dbReference>
<dbReference type="SUPFAM" id="SSF49313">
    <property type="entry name" value="Cadherin-like"/>
    <property type="match status" value="5"/>
</dbReference>
<dbReference type="PROSITE" id="PS00232">
    <property type="entry name" value="CADHERIN_1"/>
    <property type="match status" value="5"/>
</dbReference>
<dbReference type="PROSITE" id="PS50268">
    <property type="entry name" value="CADHERIN_2"/>
    <property type="match status" value="5"/>
</dbReference>
<evidence type="ECO:0000250" key="1">
    <source>
        <dbReference type="UniProtKB" id="Q91XZ4"/>
    </source>
</evidence>
<evidence type="ECO:0000255" key="2"/>
<evidence type="ECO:0000255" key="3">
    <source>
        <dbReference type="PROSITE-ProRule" id="PRU00043"/>
    </source>
</evidence>
<evidence type="ECO:0000256" key="4">
    <source>
        <dbReference type="SAM" id="MobiDB-lite"/>
    </source>
</evidence>
<evidence type="ECO:0000269" key="5">
    <source>
    </source>
</evidence>
<evidence type="ECO:0000269" key="6">
    <source>
    </source>
</evidence>
<evidence type="ECO:0000269" key="7">
    <source>
    </source>
</evidence>
<evidence type="ECO:0000305" key="8"/>
<evidence type="ECO:0000312" key="9">
    <source>
        <dbReference type="HGNC" id="HGNC:8691"/>
    </source>
</evidence>
<organism>
    <name type="scientific">Homo sapiens</name>
    <name type="common">Human</name>
    <dbReference type="NCBI Taxonomy" id="9606"/>
    <lineage>
        <taxon>Eukaryota</taxon>
        <taxon>Metazoa</taxon>
        <taxon>Chordata</taxon>
        <taxon>Craniata</taxon>
        <taxon>Vertebrata</taxon>
        <taxon>Euteleostomi</taxon>
        <taxon>Mammalia</taxon>
        <taxon>Eutheria</taxon>
        <taxon>Euarchontoglires</taxon>
        <taxon>Primates</taxon>
        <taxon>Haplorrhini</taxon>
        <taxon>Catarrhini</taxon>
        <taxon>Hominidae</taxon>
        <taxon>Homo</taxon>
    </lineage>
</organism>
<keyword id="KW-0106">Calcium</keyword>
<keyword id="KW-0130">Cell adhesion</keyword>
<keyword id="KW-1003">Cell membrane</keyword>
<keyword id="KW-1015">Disulfide bond</keyword>
<keyword id="KW-0325">Glycoprotein</keyword>
<keyword id="KW-0472">Membrane</keyword>
<keyword id="KW-0479">Metal-binding</keyword>
<keyword id="KW-1267">Proteomics identification</keyword>
<keyword id="KW-1185">Reference proteome</keyword>
<keyword id="KW-0677">Repeat</keyword>
<keyword id="KW-0732">Signal</keyword>
<keyword id="KW-0812">Transmembrane</keyword>
<keyword id="KW-1133">Transmembrane helix</keyword>